<organism>
    <name type="scientific">Mycobacterium tuberculosis (strain ATCC 25618 / H37Rv)</name>
    <dbReference type="NCBI Taxonomy" id="83332"/>
    <lineage>
        <taxon>Bacteria</taxon>
        <taxon>Bacillati</taxon>
        <taxon>Actinomycetota</taxon>
        <taxon>Actinomycetes</taxon>
        <taxon>Mycobacteriales</taxon>
        <taxon>Mycobacteriaceae</taxon>
        <taxon>Mycobacterium</taxon>
        <taxon>Mycobacterium tuberculosis complex</taxon>
    </lineage>
</organism>
<dbReference type="EC" id="3.3.2.10" evidence="2"/>
<dbReference type="EMBL" id="AL123456">
    <property type="protein sequence ID" value="CCP46159.1"/>
    <property type="molecule type" value="Genomic_DNA"/>
</dbReference>
<dbReference type="SMR" id="O53388"/>
<dbReference type="STRING" id="83332.Rv3338"/>
<dbReference type="ESTHER" id="myctu-MT3441">
    <property type="family name" value="6_AlphaBeta_hydrolase"/>
</dbReference>
<dbReference type="PaxDb" id="83332-Rv3338"/>
<dbReference type="KEGG" id="mtv:RVBD_3338"/>
<dbReference type="PATRIC" id="fig|83332.111.peg.3723"/>
<dbReference type="TubercuList" id="Rv3338"/>
<dbReference type="eggNOG" id="COG2021">
    <property type="taxonomic scope" value="Bacteria"/>
</dbReference>
<dbReference type="InParanoid" id="O53388"/>
<dbReference type="PhylomeDB" id="O53388"/>
<dbReference type="Proteomes" id="UP000001584">
    <property type="component" value="Chromosome"/>
</dbReference>
<dbReference type="GO" id="GO:0016787">
    <property type="term" value="F:hydrolase activity"/>
    <property type="evidence" value="ECO:0007669"/>
    <property type="project" value="UniProtKB-KW"/>
</dbReference>
<dbReference type="Gene3D" id="3.40.50.1820">
    <property type="entry name" value="alpha/beta hydrolase"/>
    <property type="match status" value="1"/>
</dbReference>
<dbReference type="InterPro" id="IPR000073">
    <property type="entry name" value="AB_hydrolase_1"/>
</dbReference>
<dbReference type="InterPro" id="IPR029058">
    <property type="entry name" value="AB_hydrolase_fold"/>
</dbReference>
<dbReference type="PANTHER" id="PTHR43689:SF8">
    <property type="entry name" value="ALPHA_BETA-HYDROLASES SUPERFAMILY PROTEIN"/>
    <property type="match status" value="1"/>
</dbReference>
<dbReference type="PANTHER" id="PTHR43689">
    <property type="entry name" value="HYDROLASE"/>
    <property type="match status" value="1"/>
</dbReference>
<dbReference type="Pfam" id="PF12697">
    <property type="entry name" value="Abhydrolase_6"/>
    <property type="match status" value="1"/>
</dbReference>
<dbReference type="SUPFAM" id="SSF53474">
    <property type="entry name" value="alpha/beta-Hydrolases"/>
    <property type="match status" value="1"/>
</dbReference>
<protein>
    <recommendedName>
        <fullName evidence="3">Epoxide hydrolase EphH</fullName>
        <shortName evidence="3">EH</shortName>
        <ecNumber evidence="2">3.3.2.10</ecNumber>
    </recommendedName>
</protein>
<evidence type="ECO:0000250" key="1">
    <source>
        <dbReference type="UniProtKB" id="Q99685"/>
    </source>
</evidence>
<evidence type="ECO:0000269" key="2">
    <source>
    </source>
</evidence>
<evidence type="ECO:0000303" key="3">
    <source>
    </source>
</evidence>
<evidence type="ECO:0000305" key="4"/>
<evidence type="ECO:0000312" key="5">
    <source>
        <dbReference type="EMBL" id="CCP46159.1"/>
    </source>
</evidence>
<keyword id="KW-0378">Hydrolase</keyword>
<keyword id="KW-1185">Reference proteome</keyword>
<comment type="function">
    <text evidence="2">Catalyzes the hydrolysis of epoxide-containing substrates (PubMed:36777032). In vitro, catalyzes the hydrolysis of the synthetic compounds PHOME and styrene oxide (PubMed:36777032). Plays an essential role in subverting phagosomal acidification (PubMed:36777032). Plays a major role in the survival of M.tuberculosis (Mtb) during in vitro acidic stress and protects Mtb in response to phagosomal acidification inside macrophages (PubMed:36777032). Also supports Mtb growth under the nutrient-deprived condition at pH 7.0 (PubMed:36777032).</text>
</comment>
<comment type="catalytic activity">
    <reaction evidence="2">
        <text>an epoxide + H2O = an ethanediol</text>
        <dbReference type="Rhea" id="RHEA:19037"/>
        <dbReference type="ChEBI" id="CHEBI:15377"/>
        <dbReference type="ChEBI" id="CHEBI:32955"/>
        <dbReference type="ChEBI" id="CHEBI:140594"/>
        <dbReference type="EC" id="3.3.2.10"/>
    </reaction>
</comment>
<comment type="activity regulation">
    <text evidence="2">Inhibited by AUDA, a known epoxide hydrolase inhibitor.</text>
</comment>
<comment type="biophysicochemical properties">
    <kinetics>
        <KM evidence="2">21.72 uM for PHOME</KM>
        <text evidence="2">kcat is 18.45 sec(-1) with PHOME as substrate.</text>
    </kinetics>
</comment>
<comment type="induction">
    <text evidence="2">Expression is up-regulated during acid stress.</text>
</comment>
<comment type="disruption phenotype">
    <text evidence="2">Knockdown mutant shows increased reactive oxygen species (ROS) generation in acidic stress and nutrient depleted conditions.</text>
</comment>
<comment type="similarity">
    <text evidence="4">Belongs to the AB hydrolase superfamily.</text>
</comment>
<sequence length="214" mass="23244">MSSAVLADHVERQLDELGWETSHIVGNSLGGWVAFELERRGRARSVTGIAPAGGWTRWSPVKFEVIAKFIAGAPILAVAHILGQRALRLPFSRLLATLPISATPDGVSERELSGIIDDAAHCPAYFQLLVKALVLPGLQELEHTAVPSHVVLCEQDRVVPPSRFSRHFTDSLPAGHRLTVLDGVGHVPMFEAPGRITELITSFIEECCPHVRAS</sequence>
<proteinExistence type="evidence at protein level"/>
<reference key="1">
    <citation type="journal article" date="1998" name="Nature">
        <title>Deciphering the biology of Mycobacterium tuberculosis from the complete genome sequence.</title>
        <authorList>
            <person name="Cole S.T."/>
            <person name="Brosch R."/>
            <person name="Parkhill J."/>
            <person name="Garnier T."/>
            <person name="Churcher C.M."/>
            <person name="Harris D.E."/>
            <person name="Gordon S.V."/>
            <person name="Eiglmeier K."/>
            <person name="Gas S."/>
            <person name="Barry C.E. III"/>
            <person name="Tekaia F."/>
            <person name="Badcock K."/>
            <person name="Basham D."/>
            <person name="Brown D."/>
            <person name="Chillingworth T."/>
            <person name="Connor R."/>
            <person name="Davies R.M."/>
            <person name="Devlin K."/>
            <person name="Feltwell T."/>
            <person name="Gentles S."/>
            <person name="Hamlin N."/>
            <person name="Holroyd S."/>
            <person name="Hornsby T."/>
            <person name="Jagels K."/>
            <person name="Krogh A."/>
            <person name="McLean J."/>
            <person name="Moule S."/>
            <person name="Murphy L.D."/>
            <person name="Oliver S."/>
            <person name="Osborne J."/>
            <person name="Quail M.A."/>
            <person name="Rajandream M.A."/>
            <person name="Rogers J."/>
            <person name="Rutter S."/>
            <person name="Seeger K."/>
            <person name="Skelton S."/>
            <person name="Squares S."/>
            <person name="Squares R."/>
            <person name="Sulston J.E."/>
            <person name="Taylor K."/>
            <person name="Whitehead S."/>
            <person name="Barrell B.G."/>
        </authorList>
    </citation>
    <scope>NUCLEOTIDE SEQUENCE [LARGE SCALE GENOMIC DNA]</scope>
    <source>
        <strain>ATCC 25618 / H37Rv</strain>
    </source>
</reference>
<reference key="2">
    <citation type="journal article" date="2011" name="Mol. Cell. Proteomics">
        <title>Proteogenomic analysis of Mycobacterium tuberculosis by high resolution mass spectrometry.</title>
        <authorList>
            <person name="Kelkar D.S."/>
            <person name="Kumar D."/>
            <person name="Kumar P."/>
            <person name="Balakrishnan L."/>
            <person name="Muthusamy B."/>
            <person name="Yadav A.K."/>
            <person name="Shrivastava P."/>
            <person name="Marimuthu A."/>
            <person name="Anand S."/>
            <person name="Sundaram H."/>
            <person name="Kingsbury R."/>
            <person name="Harsha H.C."/>
            <person name="Nair B."/>
            <person name="Prasad T.S."/>
            <person name="Chauhan D.S."/>
            <person name="Katoch K."/>
            <person name="Katoch V.M."/>
            <person name="Kumar P."/>
            <person name="Chaerkady R."/>
            <person name="Ramachandran S."/>
            <person name="Dash D."/>
            <person name="Pandey A."/>
        </authorList>
    </citation>
    <scope>IDENTIFICATION BY MASS SPECTROMETRY [LARGE SCALE ANALYSIS]</scope>
    <source>
        <strain>ATCC 25618 / H37Rv</strain>
    </source>
</reference>
<reference key="3">
    <citation type="journal article" date="2022" name="Front. Microbiol.">
        <title>EphH, a unique epoxide hydrolase encoded by Rv3338 is involved in the survival of Mycobacterium tuberculosis under in vitro stress and vacuolar pH-induced changes.</title>
        <authorList>
            <person name="Garg T."/>
            <person name="Das S."/>
            <person name="Singh S."/>
            <person name="Imran M."/>
            <person name="Mukhopadhyay A."/>
            <person name="Gupta U.D."/>
            <person name="Chopra S."/>
            <person name="Dasgupta A."/>
        </authorList>
    </citation>
    <scope>FUNCTION</scope>
    <scope>CATALYTIC ACTIVITY</scope>
    <scope>ACTIVITY REGULATION</scope>
    <scope>BIOPHYSICOCHEMICAL PROPERTIES</scope>
    <scope>INDUCTION</scope>
    <scope>DISRUPTION PHENOTYPE</scope>
    <source>
        <strain>H37Rv</strain>
    </source>
</reference>
<name>EPHH_MYCTU</name>
<accession>O53388</accession>
<accession>I6Y388</accession>
<accession>L0TCH4</accession>
<gene>
    <name evidence="3" type="primary">ephH</name>
    <name evidence="5" type="ordered locus">Rv3338</name>
</gene>
<feature type="chain" id="PRO_0000458097" description="Epoxide hydrolase EphH">
    <location>
        <begin position="1"/>
        <end position="214"/>
    </location>
</feature>
<feature type="active site" description="Nucleophile" evidence="1">
    <location>
        <position position="28"/>
    </location>
</feature>
<feature type="active site" description="Charge relay system" evidence="1">
    <location>
        <position position="156"/>
    </location>
</feature>
<feature type="active site" description="Charge relay system" evidence="1">
    <location>
        <position position="186"/>
    </location>
</feature>